<gene>
    <name evidence="1" type="primary">secA</name>
    <name type="ordered locus">SARI_02862</name>
</gene>
<name>SECA_SALAR</name>
<proteinExistence type="inferred from homology"/>
<protein>
    <recommendedName>
        <fullName evidence="1">Protein translocase subunit SecA</fullName>
        <ecNumber evidence="1">7.4.2.8</ecNumber>
    </recommendedName>
</protein>
<accession>A9MQB1</accession>
<evidence type="ECO:0000255" key="1">
    <source>
        <dbReference type="HAMAP-Rule" id="MF_01382"/>
    </source>
</evidence>
<sequence length="901" mass="101765">MLIKLLTKVFGSRNDRTLRRMRKAVSLINAMEPEMEKLSDDELKAKTNEFRARIEKGESVESLIPEAFAVVREASKRVFGMRHFDVQLLGGMVLNDRCIAEMRTGEGKTLTATLPAYLNALSGKGVHVVTVNDYLAQRDAENNRPLFEFLGMSVGINLPGMPAPAKREAYAADITYGTNNEYGFDYLRDNMAFSPEERVQRKLHYALVDEVDSILIDEARTPLIISGPAEDSSEMYKKVNKIIPHLIRQEKEDSDTFQGEGHFSVDEKARQVNLTERGLVLIEELLVQEGIMDEGESLYSPGNIMLMHHVTAALRAHALFTRDVDYIVKDGEVIIVDEHTGRTMQGRRWSDGLHQAVEAKEGVEIQNENQTLASITFQNYFRLYEKLAGMTGTADTEAFEFSSIYKLDTVVVPTNRPMIRKDLPDLVYMTEAEKIQAIIEDIKERTANGQPVLVGTISIEKSEVVSRELTKAGIKHNVLNAKFHANEAGIVAQAGYPAAVTIATNMAGRGTDIMLGGSWQAEVAALEAPTEEQIAQIKADWQARHDAVLAAGGLHIIGTERHESRRIDNQLRGRSGRQGDPGSSRFYLSMEDALMRIFASDRVSGMMRKLGMKPGEAIEHPWVTKAIANAQRKVESRNFDIRKQLLEYDDVANDQRRAIYSQRNELLDVSDVSDTINSIREDVFKATIDAYIPPQSLEEMWDIPGLQERLKNDFDLELPIAEWLDKEPELHEETLRERILAQSIELYQRKEEVVGAEMMRHFEKGVMLQTLDSLWKEHLAAMDYLRQGIHLRGYAQKDPKQEYKRESFAMFAAMLESLKYEVISTLSKVQVRMPEEVEAMEMQRREEAERLALMQQLSHQDDDAAVAADLAAQTGERKIGRNDPCPCGSGKKYKQCHGRLS</sequence>
<feature type="chain" id="PRO_1000087329" description="Protein translocase subunit SecA">
    <location>
        <begin position="1"/>
        <end position="901"/>
    </location>
</feature>
<feature type="binding site" evidence="1">
    <location>
        <position position="87"/>
    </location>
    <ligand>
        <name>ATP</name>
        <dbReference type="ChEBI" id="CHEBI:30616"/>
    </ligand>
</feature>
<feature type="binding site" evidence="1">
    <location>
        <begin position="105"/>
        <end position="109"/>
    </location>
    <ligand>
        <name>ATP</name>
        <dbReference type="ChEBI" id="CHEBI:30616"/>
    </ligand>
</feature>
<feature type="binding site" evidence="1">
    <location>
        <position position="512"/>
    </location>
    <ligand>
        <name>ATP</name>
        <dbReference type="ChEBI" id="CHEBI:30616"/>
    </ligand>
</feature>
<feature type="binding site" evidence="1">
    <location>
        <position position="885"/>
    </location>
    <ligand>
        <name>Zn(2+)</name>
        <dbReference type="ChEBI" id="CHEBI:29105"/>
    </ligand>
</feature>
<feature type="binding site" evidence="1">
    <location>
        <position position="887"/>
    </location>
    <ligand>
        <name>Zn(2+)</name>
        <dbReference type="ChEBI" id="CHEBI:29105"/>
    </ligand>
</feature>
<feature type="binding site" evidence="1">
    <location>
        <position position="896"/>
    </location>
    <ligand>
        <name>Zn(2+)</name>
        <dbReference type="ChEBI" id="CHEBI:29105"/>
    </ligand>
</feature>
<feature type="binding site" evidence="1">
    <location>
        <position position="897"/>
    </location>
    <ligand>
        <name>Zn(2+)</name>
        <dbReference type="ChEBI" id="CHEBI:29105"/>
    </ligand>
</feature>
<dbReference type="EC" id="7.4.2.8" evidence="1"/>
<dbReference type="EMBL" id="CP000880">
    <property type="protein sequence ID" value="ABX22709.1"/>
    <property type="molecule type" value="Genomic_DNA"/>
</dbReference>
<dbReference type="SMR" id="A9MQB1"/>
<dbReference type="STRING" id="41514.SARI_02862"/>
<dbReference type="KEGG" id="ses:SARI_02862"/>
<dbReference type="HOGENOM" id="CLU_005314_3_0_6"/>
<dbReference type="Proteomes" id="UP000002084">
    <property type="component" value="Chromosome"/>
</dbReference>
<dbReference type="GO" id="GO:0031522">
    <property type="term" value="C:cell envelope Sec protein transport complex"/>
    <property type="evidence" value="ECO:0007669"/>
    <property type="project" value="TreeGrafter"/>
</dbReference>
<dbReference type="GO" id="GO:0005829">
    <property type="term" value="C:cytosol"/>
    <property type="evidence" value="ECO:0007669"/>
    <property type="project" value="TreeGrafter"/>
</dbReference>
<dbReference type="GO" id="GO:0005886">
    <property type="term" value="C:plasma membrane"/>
    <property type="evidence" value="ECO:0007669"/>
    <property type="project" value="UniProtKB-SubCell"/>
</dbReference>
<dbReference type="GO" id="GO:0005524">
    <property type="term" value="F:ATP binding"/>
    <property type="evidence" value="ECO:0007669"/>
    <property type="project" value="UniProtKB-UniRule"/>
</dbReference>
<dbReference type="GO" id="GO:0046872">
    <property type="term" value="F:metal ion binding"/>
    <property type="evidence" value="ECO:0007669"/>
    <property type="project" value="UniProtKB-KW"/>
</dbReference>
<dbReference type="GO" id="GO:0008564">
    <property type="term" value="F:protein-exporting ATPase activity"/>
    <property type="evidence" value="ECO:0007669"/>
    <property type="project" value="UniProtKB-EC"/>
</dbReference>
<dbReference type="GO" id="GO:0065002">
    <property type="term" value="P:intracellular protein transmembrane transport"/>
    <property type="evidence" value="ECO:0007669"/>
    <property type="project" value="UniProtKB-UniRule"/>
</dbReference>
<dbReference type="GO" id="GO:0017038">
    <property type="term" value="P:protein import"/>
    <property type="evidence" value="ECO:0007669"/>
    <property type="project" value="InterPro"/>
</dbReference>
<dbReference type="GO" id="GO:0006605">
    <property type="term" value="P:protein targeting"/>
    <property type="evidence" value="ECO:0007669"/>
    <property type="project" value="UniProtKB-UniRule"/>
</dbReference>
<dbReference type="GO" id="GO:0043952">
    <property type="term" value="P:protein transport by the Sec complex"/>
    <property type="evidence" value="ECO:0007669"/>
    <property type="project" value="TreeGrafter"/>
</dbReference>
<dbReference type="CDD" id="cd17928">
    <property type="entry name" value="DEXDc_SecA"/>
    <property type="match status" value="1"/>
</dbReference>
<dbReference type="CDD" id="cd18803">
    <property type="entry name" value="SF2_C_secA"/>
    <property type="match status" value="1"/>
</dbReference>
<dbReference type="FunFam" id="1.10.3060.10:FF:000001">
    <property type="entry name" value="Preprotein translocase subunit SecA"/>
    <property type="match status" value="1"/>
</dbReference>
<dbReference type="FunFam" id="3.40.50.300:FF:000081">
    <property type="entry name" value="Preprotein translocase subunit SecA"/>
    <property type="match status" value="1"/>
</dbReference>
<dbReference type="FunFam" id="3.40.50.300:FF:000113">
    <property type="entry name" value="Preprotein translocase subunit SecA"/>
    <property type="match status" value="1"/>
</dbReference>
<dbReference type="FunFam" id="3.90.1440.10:FF:000001">
    <property type="entry name" value="Preprotein translocase subunit SecA"/>
    <property type="match status" value="1"/>
</dbReference>
<dbReference type="Gene3D" id="1.10.3060.10">
    <property type="entry name" value="Helical scaffold and wing domains of SecA"/>
    <property type="match status" value="1"/>
</dbReference>
<dbReference type="Gene3D" id="3.40.50.300">
    <property type="entry name" value="P-loop containing nucleotide triphosphate hydrolases"/>
    <property type="match status" value="2"/>
</dbReference>
<dbReference type="Gene3D" id="3.90.1440.10">
    <property type="entry name" value="SecA, preprotein cross-linking domain"/>
    <property type="match status" value="1"/>
</dbReference>
<dbReference type="HAMAP" id="MF_01382">
    <property type="entry name" value="SecA"/>
    <property type="match status" value="1"/>
</dbReference>
<dbReference type="InterPro" id="IPR014001">
    <property type="entry name" value="Helicase_ATP-bd"/>
</dbReference>
<dbReference type="InterPro" id="IPR027417">
    <property type="entry name" value="P-loop_NTPase"/>
</dbReference>
<dbReference type="InterPro" id="IPR004027">
    <property type="entry name" value="SEC_C_motif"/>
</dbReference>
<dbReference type="InterPro" id="IPR000185">
    <property type="entry name" value="SecA"/>
</dbReference>
<dbReference type="InterPro" id="IPR020937">
    <property type="entry name" value="SecA_CS"/>
</dbReference>
<dbReference type="InterPro" id="IPR011115">
    <property type="entry name" value="SecA_DEAD"/>
</dbReference>
<dbReference type="InterPro" id="IPR014018">
    <property type="entry name" value="SecA_motor_DEAD"/>
</dbReference>
<dbReference type="InterPro" id="IPR011130">
    <property type="entry name" value="SecA_preprotein_X-link_dom"/>
</dbReference>
<dbReference type="InterPro" id="IPR044722">
    <property type="entry name" value="SecA_SF2_C"/>
</dbReference>
<dbReference type="InterPro" id="IPR011116">
    <property type="entry name" value="SecA_Wing/Scaffold"/>
</dbReference>
<dbReference type="InterPro" id="IPR036266">
    <property type="entry name" value="SecA_Wing/Scaffold_sf"/>
</dbReference>
<dbReference type="InterPro" id="IPR036670">
    <property type="entry name" value="SecA_X-link_sf"/>
</dbReference>
<dbReference type="NCBIfam" id="NF009538">
    <property type="entry name" value="PRK12904.1"/>
    <property type="match status" value="1"/>
</dbReference>
<dbReference type="NCBIfam" id="TIGR00963">
    <property type="entry name" value="secA"/>
    <property type="match status" value="1"/>
</dbReference>
<dbReference type="PANTHER" id="PTHR30612:SF0">
    <property type="entry name" value="CHLOROPLAST PROTEIN-TRANSPORTING ATPASE"/>
    <property type="match status" value="1"/>
</dbReference>
<dbReference type="PANTHER" id="PTHR30612">
    <property type="entry name" value="SECA INNER MEMBRANE COMPONENT OF SEC PROTEIN SECRETION SYSTEM"/>
    <property type="match status" value="1"/>
</dbReference>
<dbReference type="Pfam" id="PF21090">
    <property type="entry name" value="P-loop_SecA"/>
    <property type="match status" value="1"/>
</dbReference>
<dbReference type="Pfam" id="PF02810">
    <property type="entry name" value="SEC-C"/>
    <property type="match status" value="1"/>
</dbReference>
<dbReference type="Pfam" id="PF07517">
    <property type="entry name" value="SecA_DEAD"/>
    <property type="match status" value="1"/>
</dbReference>
<dbReference type="Pfam" id="PF01043">
    <property type="entry name" value="SecA_PP_bind"/>
    <property type="match status" value="1"/>
</dbReference>
<dbReference type="Pfam" id="PF07516">
    <property type="entry name" value="SecA_SW"/>
    <property type="match status" value="1"/>
</dbReference>
<dbReference type="PRINTS" id="PR00906">
    <property type="entry name" value="SECA"/>
</dbReference>
<dbReference type="SMART" id="SM00957">
    <property type="entry name" value="SecA_DEAD"/>
    <property type="match status" value="1"/>
</dbReference>
<dbReference type="SMART" id="SM00958">
    <property type="entry name" value="SecA_PP_bind"/>
    <property type="match status" value="1"/>
</dbReference>
<dbReference type="SUPFAM" id="SSF81886">
    <property type="entry name" value="Helical scaffold and wing domains of SecA"/>
    <property type="match status" value="1"/>
</dbReference>
<dbReference type="SUPFAM" id="SSF52540">
    <property type="entry name" value="P-loop containing nucleoside triphosphate hydrolases"/>
    <property type="match status" value="2"/>
</dbReference>
<dbReference type="SUPFAM" id="SSF81767">
    <property type="entry name" value="Pre-protein crosslinking domain of SecA"/>
    <property type="match status" value="1"/>
</dbReference>
<dbReference type="PROSITE" id="PS01312">
    <property type="entry name" value="SECA"/>
    <property type="match status" value="1"/>
</dbReference>
<dbReference type="PROSITE" id="PS51196">
    <property type="entry name" value="SECA_MOTOR_DEAD"/>
    <property type="match status" value="1"/>
</dbReference>
<comment type="function">
    <text evidence="1">Part of the Sec protein translocase complex. Interacts with the SecYEG preprotein conducting channel. Has a central role in coupling the hydrolysis of ATP to the transfer of proteins into and across the cell membrane, serving both as a receptor for the preprotein-SecB complex and as an ATP-driven molecular motor driving the stepwise translocation of polypeptide chains across the membrane.</text>
</comment>
<comment type="catalytic activity">
    <reaction evidence="1">
        <text>ATP + H2O + cellular proteinSide 1 = ADP + phosphate + cellular proteinSide 2.</text>
        <dbReference type="EC" id="7.4.2.8"/>
    </reaction>
</comment>
<comment type="cofactor">
    <cofactor evidence="1">
        <name>Zn(2+)</name>
        <dbReference type="ChEBI" id="CHEBI:29105"/>
    </cofactor>
    <text evidence="1">May bind 1 zinc ion per subunit.</text>
</comment>
<comment type="subunit">
    <text evidence="1">Monomer and homodimer. Part of the essential Sec protein translocation apparatus which comprises SecA, SecYEG and auxiliary proteins SecDF-YajC and YidC.</text>
</comment>
<comment type="subcellular location">
    <subcellularLocation>
        <location evidence="1">Cell inner membrane</location>
        <topology evidence="1">Peripheral membrane protein</topology>
        <orientation evidence="1">Cytoplasmic side</orientation>
    </subcellularLocation>
    <subcellularLocation>
        <location evidence="1">Cytoplasm</location>
    </subcellularLocation>
    <text evidence="1">Distribution is 50-50.</text>
</comment>
<comment type="induction">
    <text evidence="1">Repressed under conditions of excess protein secretion capacity and derepressed when protein secretion becomes limiting. This is regulated by SecM.</text>
</comment>
<comment type="similarity">
    <text evidence="1">Belongs to the SecA family.</text>
</comment>
<keyword id="KW-0067">ATP-binding</keyword>
<keyword id="KW-0997">Cell inner membrane</keyword>
<keyword id="KW-1003">Cell membrane</keyword>
<keyword id="KW-0963">Cytoplasm</keyword>
<keyword id="KW-0472">Membrane</keyword>
<keyword id="KW-0479">Metal-binding</keyword>
<keyword id="KW-0547">Nucleotide-binding</keyword>
<keyword id="KW-0653">Protein transport</keyword>
<keyword id="KW-1185">Reference proteome</keyword>
<keyword id="KW-1278">Translocase</keyword>
<keyword id="KW-0811">Translocation</keyword>
<keyword id="KW-0813">Transport</keyword>
<keyword id="KW-0862">Zinc</keyword>
<reference key="1">
    <citation type="submission" date="2007-11" db="EMBL/GenBank/DDBJ databases">
        <authorList>
            <consortium name="The Salmonella enterica serovar Arizonae Genome Sequencing Project"/>
            <person name="McClelland M."/>
            <person name="Sanderson E.K."/>
            <person name="Porwollik S."/>
            <person name="Spieth J."/>
            <person name="Clifton W.S."/>
            <person name="Fulton R."/>
            <person name="Chunyan W."/>
            <person name="Wollam A."/>
            <person name="Shah N."/>
            <person name="Pepin K."/>
            <person name="Bhonagiri V."/>
            <person name="Nash W."/>
            <person name="Johnson M."/>
            <person name="Thiruvilangam P."/>
            <person name="Wilson R."/>
        </authorList>
    </citation>
    <scope>NUCLEOTIDE SEQUENCE [LARGE SCALE GENOMIC DNA]</scope>
    <source>
        <strain>ATCC BAA-731 / CDC346-86 / RSK2980</strain>
    </source>
</reference>
<organism>
    <name type="scientific">Salmonella arizonae (strain ATCC BAA-731 / CDC346-86 / RSK2980)</name>
    <dbReference type="NCBI Taxonomy" id="41514"/>
    <lineage>
        <taxon>Bacteria</taxon>
        <taxon>Pseudomonadati</taxon>
        <taxon>Pseudomonadota</taxon>
        <taxon>Gammaproteobacteria</taxon>
        <taxon>Enterobacterales</taxon>
        <taxon>Enterobacteriaceae</taxon>
        <taxon>Salmonella</taxon>
    </lineage>
</organism>